<name>PYRD_PSYIN</name>
<protein>
    <recommendedName>
        <fullName evidence="1">Dihydroorotate dehydrogenase (quinone)</fullName>
        <ecNumber evidence="1">1.3.5.2</ecNumber>
    </recommendedName>
    <alternativeName>
        <fullName evidence="1">DHOdehase</fullName>
        <shortName evidence="1">DHOD</shortName>
        <shortName evidence="1">DHODase</shortName>
    </alternativeName>
    <alternativeName>
        <fullName evidence="1">Dihydroorotate oxidase</fullName>
    </alternativeName>
</protein>
<accession>A1SX25</accession>
<organism>
    <name type="scientific">Psychromonas ingrahamii (strain DSM 17664 / CCUG 51855 / 37)</name>
    <dbReference type="NCBI Taxonomy" id="357804"/>
    <lineage>
        <taxon>Bacteria</taxon>
        <taxon>Pseudomonadati</taxon>
        <taxon>Pseudomonadota</taxon>
        <taxon>Gammaproteobacteria</taxon>
        <taxon>Alteromonadales</taxon>
        <taxon>Psychromonadaceae</taxon>
        <taxon>Psychromonas</taxon>
    </lineage>
</organism>
<proteinExistence type="inferred from homology"/>
<dbReference type="EC" id="1.3.5.2" evidence="1"/>
<dbReference type="EMBL" id="CP000510">
    <property type="protein sequence ID" value="ABM04040.1"/>
    <property type="molecule type" value="Genomic_DNA"/>
</dbReference>
<dbReference type="RefSeq" id="WP_011770600.1">
    <property type="nucleotide sequence ID" value="NC_008709.1"/>
</dbReference>
<dbReference type="SMR" id="A1SX25"/>
<dbReference type="STRING" id="357804.Ping_2299"/>
<dbReference type="KEGG" id="pin:Ping_2299"/>
<dbReference type="eggNOG" id="COG0167">
    <property type="taxonomic scope" value="Bacteria"/>
</dbReference>
<dbReference type="HOGENOM" id="CLU_013640_2_0_6"/>
<dbReference type="OrthoDB" id="9802377at2"/>
<dbReference type="UniPathway" id="UPA00070">
    <property type="reaction ID" value="UER00946"/>
</dbReference>
<dbReference type="Proteomes" id="UP000000639">
    <property type="component" value="Chromosome"/>
</dbReference>
<dbReference type="GO" id="GO:0005737">
    <property type="term" value="C:cytoplasm"/>
    <property type="evidence" value="ECO:0007669"/>
    <property type="project" value="InterPro"/>
</dbReference>
<dbReference type="GO" id="GO:0005886">
    <property type="term" value="C:plasma membrane"/>
    <property type="evidence" value="ECO:0007669"/>
    <property type="project" value="UniProtKB-SubCell"/>
</dbReference>
<dbReference type="GO" id="GO:0106430">
    <property type="term" value="F:dihydroorotate dehydrogenase (quinone) activity"/>
    <property type="evidence" value="ECO:0007669"/>
    <property type="project" value="UniProtKB-EC"/>
</dbReference>
<dbReference type="GO" id="GO:0006207">
    <property type="term" value="P:'de novo' pyrimidine nucleobase biosynthetic process"/>
    <property type="evidence" value="ECO:0007669"/>
    <property type="project" value="InterPro"/>
</dbReference>
<dbReference type="GO" id="GO:0044205">
    <property type="term" value="P:'de novo' UMP biosynthetic process"/>
    <property type="evidence" value="ECO:0007669"/>
    <property type="project" value="UniProtKB-UniRule"/>
</dbReference>
<dbReference type="CDD" id="cd04738">
    <property type="entry name" value="DHOD_2_like"/>
    <property type="match status" value="1"/>
</dbReference>
<dbReference type="FunFam" id="3.20.20.70:FF:000028">
    <property type="entry name" value="Dihydroorotate dehydrogenase (quinone)"/>
    <property type="match status" value="1"/>
</dbReference>
<dbReference type="Gene3D" id="3.20.20.70">
    <property type="entry name" value="Aldolase class I"/>
    <property type="match status" value="1"/>
</dbReference>
<dbReference type="HAMAP" id="MF_00225">
    <property type="entry name" value="DHO_dh_type2"/>
    <property type="match status" value="1"/>
</dbReference>
<dbReference type="InterPro" id="IPR013785">
    <property type="entry name" value="Aldolase_TIM"/>
</dbReference>
<dbReference type="InterPro" id="IPR050074">
    <property type="entry name" value="DHO_dehydrogenase"/>
</dbReference>
<dbReference type="InterPro" id="IPR012135">
    <property type="entry name" value="Dihydroorotate_DH_1_2"/>
</dbReference>
<dbReference type="InterPro" id="IPR005719">
    <property type="entry name" value="Dihydroorotate_DH_2"/>
</dbReference>
<dbReference type="InterPro" id="IPR005720">
    <property type="entry name" value="Dihydroorotate_DH_cat"/>
</dbReference>
<dbReference type="InterPro" id="IPR001295">
    <property type="entry name" value="Dihydroorotate_DH_CS"/>
</dbReference>
<dbReference type="NCBIfam" id="NF003644">
    <property type="entry name" value="PRK05286.1-1"/>
    <property type="match status" value="1"/>
</dbReference>
<dbReference type="NCBIfam" id="NF003645">
    <property type="entry name" value="PRK05286.1-2"/>
    <property type="match status" value="1"/>
</dbReference>
<dbReference type="NCBIfam" id="NF003646">
    <property type="entry name" value="PRK05286.1-4"/>
    <property type="match status" value="1"/>
</dbReference>
<dbReference type="NCBIfam" id="NF003652">
    <property type="entry name" value="PRK05286.2-5"/>
    <property type="match status" value="1"/>
</dbReference>
<dbReference type="NCBIfam" id="TIGR01036">
    <property type="entry name" value="pyrD_sub2"/>
    <property type="match status" value="1"/>
</dbReference>
<dbReference type="PANTHER" id="PTHR48109:SF4">
    <property type="entry name" value="DIHYDROOROTATE DEHYDROGENASE (QUINONE), MITOCHONDRIAL"/>
    <property type="match status" value="1"/>
</dbReference>
<dbReference type="PANTHER" id="PTHR48109">
    <property type="entry name" value="DIHYDROOROTATE DEHYDROGENASE (QUINONE), MITOCHONDRIAL-RELATED"/>
    <property type="match status" value="1"/>
</dbReference>
<dbReference type="Pfam" id="PF01180">
    <property type="entry name" value="DHO_dh"/>
    <property type="match status" value="1"/>
</dbReference>
<dbReference type="PIRSF" id="PIRSF000164">
    <property type="entry name" value="DHO_oxidase"/>
    <property type="match status" value="1"/>
</dbReference>
<dbReference type="SUPFAM" id="SSF51395">
    <property type="entry name" value="FMN-linked oxidoreductases"/>
    <property type="match status" value="1"/>
</dbReference>
<dbReference type="PROSITE" id="PS00911">
    <property type="entry name" value="DHODEHASE_1"/>
    <property type="match status" value="1"/>
</dbReference>
<dbReference type="PROSITE" id="PS00912">
    <property type="entry name" value="DHODEHASE_2"/>
    <property type="match status" value="1"/>
</dbReference>
<sequence length="336" mass="36670">MFYQIMRSFLFMLNPEKAHDFSIKQLKLTQGTALDFIYRQRVQQRPVQVMGLTFPNSVGLAAGLDKNGECIDAFGAMGFGHIEVGTVTPVAQPGNESPRMFRVLESDGIINRMGFNNEGVENLIKNVKESNFKGVIGINIGKNFSTPVEQGKEDYLLCMDKVYPYADYIAVNISSPNTPGLRSLQYGDALNELLAALKIRQAELQVKYNKYVPIALKIAPDLSDQEIVSIAKSLLEYKIDGLIATNTTLDRDMVKGMSHAGEAGGLSGRPLQNKSTAVIAKFAAQLKGEIPIIGVGGIDNVIAAKEKIQAGASLVQIYSGFIYHGPQLVKNIVNNI</sequence>
<reference key="1">
    <citation type="journal article" date="2008" name="BMC Genomics">
        <title>Genomics of an extreme psychrophile, Psychromonas ingrahamii.</title>
        <authorList>
            <person name="Riley M."/>
            <person name="Staley J.T."/>
            <person name="Danchin A."/>
            <person name="Wang T.Z."/>
            <person name="Brettin T.S."/>
            <person name="Hauser L.J."/>
            <person name="Land M.L."/>
            <person name="Thompson L.S."/>
        </authorList>
    </citation>
    <scope>NUCLEOTIDE SEQUENCE [LARGE SCALE GENOMIC DNA]</scope>
    <source>
        <strain>DSM 17664 / CCUG 51855 / 37</strain>
    </source>
</reference>
<keyword id="KW-1003">Cell membrane</keyword>
<keyword id="KW-0285">Flavoprotein</keyword>
<keyword id="KW-0288">FMN</keyword>
<keyword id="KW-0472">Membrane</keyword>
<keyword id="KW-0560">Oxidoreductase</keyword>
<keyword id="KW-0665">Pyrimidine biosynthesis</keyword>
<keyword id="KW-1185">Reference proteome</keyword>
<comment type="function">
    <text evidence="1">Catalyzes the conversion of dihydroorotate to orotate with quinone as electron acceptor.</text>
</comment>
<comment type="catalytic activity">
    <reaction evidence="1">
        <text>(S)-dihydroorotate + a quinone = orotate + a quinol</text>
        <dbReference type="Rhea" id="RHEA:30187"/>
        <dbReference type="ChEBI" id="CHEBI:24646"/>
        <dbReference type="ChEBI" id="CHEBI:30839"/>
        <dbReference type="ChEBI" id="CHEBI:30864"/>
        <dbReference type="ChEBI" id="CHEBI:132124"/>
        <dbReference type="EC" id="1.3.5.2"/>
    </reaction>
</comment>
<comment type="cofactor">
    <cofactor evidence="1">
        <name>FMN</name>
        <dbReference type="ChEBI" id="CHEBI:58210"/>
    </cofactor>
    <text evidence="1">Binds 1 FMN per subunit.</text>
</comment>
<comment type="pathway">
    <text evidence="1">Pyrimidine metabolism; UMP biosynthesis via de novo pathway; orotate from (S)-dihydroorotate (quinone route): step 1/1.</text>
</comment>
<comment type="subunit">
    <text evidence="1">Monomer.</text>
</comment>
<comment type="subcellular location">
    <subcellularLocation>
        <location evidence="1">Cell membrane</location>
        <topology evidence="1">Peripheral membrane protein</topology>
    </subcellularLocation>
</comment>
<comment type="similarity">
    <text evidence="1">Belongs to the dihydroorotate dehydrogenase family. Type 2 subfamily.</text>
</comment>
<feature type="chain" id="PRO_1000024209" description="Dihydroorotate dehydrogenase (quinone)">
    <location>
        <begin position="1"/>
        <end position="336"/>
    </location>
</feature>
<feature type="active site" description="Nucleophile" evidence="1">
    <location>
        <position position="175"/>
    </location>
</feature>
<feature type="binding site" evidence="1">
    <location>
        <begin position="62"/>
        <end position="66"/>
    </location>
    <ligand>
        <name>FMN</name>
        <dbReference type="ChEBI" id="CHEBI:58210"/>
    </ligand>
</feature>
<feature type="binding site" evidence="1">
    <location>
        <position position="66"/>
    </location>
    <ligand>
        <name>substrate</name>
    </ligand>
</feature>
<feature type="binding site" evidence="1">
    <location>
        <position position="86"/>
    </location>
    <ligand>
        <name>FMN</name>
        <dbReference type="ChEBI" id="CHEBI:58210"/>
    </ligand>
</feature>
<feature type="binding site" evidence="1">
    <location>
        <begin position="111"/>
        <end position="115"/>
    </location>
    <ligand>
        <name>substrate</name>
    </ligand>
</feature>
<feature type="binding site" evidence="1">
    <location>
        <position position="139"/>
    </location>
    <ligand>
        <name>FMN</name>
        <dbReference type="ChEBI" id="CHEBI:58210"/>
    </ligand>
</feature>
<feature type="binding site" evidence="1">
    <location>
        <position position="172"/>
    </location>
    <ligand>
        <name>FMN</name>
        <dbReference type="ChEBI" id="CHEBI:58210"/>
    </ligand>
</feature>
<feature type="binding site" evidence="1">
    <location>
        <position position="172"/>
    </location>
    <ligand>
        <name>substrate</name>
    </ligand>
</feature>
<feature type="binding site" evidence="1">
    <location>
        <position position="177"/>
    </location>
    <ligand>
        <name>substrate</name>
    </ligand>
</feature>
<feature type="binding site" evidence="1">
    <location>
        <position position="217"/>
    </location>
    <ligand>
        <name>FMN</name>
        <dbReference type="ChEBI" id="CHEBI:58210"/>
    </ligand>
</feature>
<feature type="binding site" evidence="1">
    <location>
        <position position="245"/>
    </location>
    <ligand>
        <name>FMN</name>
        <dbReference type="ChEBI" id="CHEBI:58210"/>
    </ligand>
</feature>
<feature type="binding site" evidence="1">
    <location>
        <begin position="246"/>
        <end position="247"/>
    </location>
    <ligand>
        <name>substrate</name>
    </ligand>
</feature>
<feature type="binding site" evidence="1">
    <location>
        <position position="268"/>
    </location>
    <ligand>
        <name>FMN</name>
        <dbReference type="ChEBI" id="CHEBI:58210"/>
    </ligand>
</feature>
<feature type="binding site" evidence="1">
    <location>
        <position position="297"/>
    </location>
    <ligand>
        <name>FMN</name>
        <dbReference type="ChEBI" id="CHEBI:58210"/>
    </ligand>
</feature>
<feature type="binding site" evidence="1">
    <location>
        <begin position="318"/>
        <end position="319"/>
    </location>
    <ligand>
        <name>FMN</name>
        <dbReference type="ChEBI" id="CHEBI:58210"/>
    </ligand>
</feature>
<evidence type="ECO:0000255" key="1">
    <source>
        <dbReference type="HAMAP-Rule" id="MF_00225"/>
    </source>
</evidence>
<gene>
    <name evidence="1" type="primary">pyrD</name>
    <name type="ordered locus">Ping_2299</name>
</gene>